<name>PILT_PSEAE</name>
<accession>P24559</accession>
<sequence length="344" mass="38021">MDITELLAFSAKQGASDLHLSAGLPPMIRVDGDVRRINLPPLEHKQVHALIYDIMNDKQRKDFEEFLETDFSFEVPGVARFRVNAFNQNRGAGAVFRTIPSKVLTMEELGMGEVFKRVSDVPRGLVLVTGPTGSGKSTTLAAMLDYLNNTKYHHILTIEDPIEFVHESKKCLVNQREVHRDTLGFSEALRSALREDPDIILVGEMRDLETIRLALTAAETGHLVFGTLHTTSAAKTIDRVVDVFPAEEKAMVRSMLSESLQSVISQTLIKKIGGGRVAAHEIMIGTPAIRNLIREDKVAQMYSAIQTGGSLGMQTLDMCLKGLVAKGLISRENAREKAKIPENF</sequence>
<reference key="1">
    <citation type="journal article" date="1991" name="Gene">
        <title>Characterisation of a Pseudomonas aeruginosa twitching motility gene and evidence for a specialised protein export system widespread in eubacteria.</title>
        <authorList>
            <person name="Whitchurch C.B."/>
            <person name="Hobbs M."/>
            <person name="Livingston S.P."/>
            <person name="Krishnapillai V."/>
            <person name="Mattick J.S."/>
        </authorList>
    </citation>
    <scope>NUCLEOTIDE SEQUENCE [GENOMIC DNA]</scope>
    <source>
        <strain>ATCC 15692 / DSM 22644 / CIP 104116 / JCM 14847 / LMG 12228 / 1C / PRS 101 / PAO1</strain>
    </source>
</reference>
<reference key="2">
    <citation type="journal article" date="2000" name="Nature">
        <title>Complete genome sequence of Pseudomonas aeruginosa PAO1, an opportunistic pathogen.</title>
        <authorList>
            <person name="Stover C.K."/>
            <person name="Pham X.-Q.T."/>
            <person name="Erwin A.L."/>
            <person name="Mizoguchi S.D."/>
            <person name="Warrener P."/>
            <person name="Hickey M.J."/>
            <person name="Brinkman F.S.L."/>
            <person name="Hufnagle W.O."/>
            <person name="Kowalik D.J."/>
            <person name="Lagrou M."/>
            <person name="Garber R.L."/>
            <person name="Goltry L."/>
            <person name="Tolentino E."/>
            <person name="Westbrock-Wadman S."/>
            <person name="Yuan Y."/>
            <person name="Brody L.L."/>
            <person name="Coulter S.N."/>
            <person name="Folger K.R."/>
            <person name="Kas A."/>
            <person name="Larbig K."/>
            <person name="Lim R.M."/>
            <person name="Smith K.A."/>
            <person name="Spencer D.H."/>
            <person name="Wong G.K.-S."/>
            <person name="Wu Z."/>
            <person name="Paulsen I.T."/>
            <person name="Reizer J."/>
            <person name="Saier M.H. Jr."/>
            <person name="Hancock R.E.W."/>
            <person name="Lory S."/>
            <person name="Olson M.V."/>
        </authorList>
    </citation>
    <scope>NUCLEOTIDE SEQUENCE [LARGE SCALE GENOMIC DNA]</scope>
    <source>
        <strain>ATCC 15692 / DSM 22644 / CIP 104116 / JCM 14847 / LMG 12228 / 1C / PRS 101 / PAO1</strain>
    </source>
</reference>
<reference key="3">
    <citation type="journal article" date="1999" name="Infect. Immun.">
        <title>Pseudomonas aeruginosa gene products PilT and PilU are required for cytotoxicity in vitro and virulence in a mouse model of acute pneumonia.</title>
        <authorList>
            <person name="Comolli J.C."/>
            <person name="Hauser A.R."/>
            <person name="Waite L."/>
            <person name="Whitchurch C.B."/>
            <person name="Mattick J.S."/>
            <person name="Engel J.N."/>
        </authorList>
    </citation>
    <scope>FUNCTION</scope>
    <scope>DISRUPTION PHENOTYPE</scope>
    <source>
        <strain>PAK</strain>
    </source>
</reference>
<reference key="4">
    <citation type="journal article" date="2005" name="J. Bacteriol.">
        <title>Functional dissection of a conserved motif within the pilus retraction protein PilT.</title>
        <authorList>
            <person name="Aukema K.G."/>
            <person name="Kron E.M."/>
            <person name="Herdendorf T.J."/>
            <person name="Forest K.T."/>
        </authorList>
    </citation>
    <scope>FUNCTION</scope>
    <scope>MUTAGENESIS OF LYS-136; ALA-288; ILE-289 AND LEU-292</scope>
    <scope>DISRUPTION PHENOTYPE</scope>
    <source>
        <strain>PAK</strain>
    </source>
</reference>
<reference key="5">
    <citation type="journal article" date="2005" name="J. Bacteriol.">
        <title>Disparate subcellular localization patterns of Pseudomonas aeruginosa Type IV pilus ATPases involved in twitching motility.</title>
        <authorList>
            <person name="Chiang P."/>
            <person name="Habash M."/>
            <person name="Burrows L.L."/>
        </authorList>
    </citation>
    <scope>SUBCELLULAR LOCATION</scope>
</reference>
<reference key="6">
    <citation type="journal article" date="2008" name="Microbiology">
        <title>Functional role of conserved residues in the characteristic secretion NTPase motifs of the Pseudomonas aeruginosa type IV pilus motor proteins PilB, PilT and PilU.</title>
        <authorList>
            <person name="Chiang P."/>
            <person name="Sampaleanu L.M."/>
            <person name="Ayers M."/>
            <person name="Pahuta M."/>
            <person name="Howell P.L."/>
            <person name="Burrows L.L."/>
        </authorList>
    </citation>
    <scope>FUNCTION</scope>
    <scope>MUTAGENESIS OF GLY-135; GLU-163; GLU-204 AND HIS-229</scope>
</reference>
<reference key="7">
    <citation type="journal article" date="2019" name="PLoS Genet.">
        <title>PilT and PilU are homohexameric ATPases that coordinate to retract type IVa pili.</title>
        <authorList>
            <person name="Chlebek J.L."/>
            <person name="Hughes H.Q."/>
            <person name="Ratkiewicz A.S."/>
            <person name="Rayyan R."/>
            <person name="Wang J.C."/>
            <person name="Herrin B.E."/>
            <person name="Dalia T.N."/>
            <person name="Biais N."/>
            <person name="Dalia A.B."/>
        </authorList>
    </citation>
    <scope>FUNCTION</scope>
    <scope>SUBUNIT</scope>
</reference>
<reference key="8">
    <citation type="journal article" date="2016" name="J. Infect. Chemother.">
        <title>The pilT gene contributes to type III ExoS effector injection into epithelial cells in Pseudomonas aeruginosa.</title>
        <authorList>
            <person name="Shikata M."/>
            <person name="Hayashi N."/>
            <person name="Fujimoto A."/>
            <person name="Nakamura T."/>
            <person name="Matsui N."/>
            <person name="Ishiyama A."/>
            <person name="Maekawa Y."/>
            <person name="Gotoh N."/>
        </authorList>
    </citation>
    <scope>FUNCTION</scope>
    <scope>SUBUNIT</scope>
</reference>
<reference evidence="10 11" key="9">
    <citation type="journal article" date="2010" name="J. Mol. Biol.">
        <title>P. aeruginosa PilT structures with and without nucleotide reveal a dynamic type IV pilus retraction motor.</title>
        <authorList>
            <person name="Misic A.M."/>
            <person name="Satyshur K.A."/>
            <person name="Forest K.T."/>
        </authorList>
    </citation>
    <scope>X-RAY CRYSTALLOGRAPHY (2.60 ANGSTROMS) IN COMPLEX WITH ATP ANALOG</scope>
    <scope>SUBUNIT</scope>
</reference>
<keyword id="KW-0002">3D-structure</keyword>
<keyword id="KW-0067">ATP-binding</keyword>
<keyword id="KW-0963">Cytoplasm</keyword>
<keyword id="KW-1029">Fimbrium biogenesis</keyword>
<keyword id="KW-0547">Nucleotide-binding</keyword>
<keyword id="KW-1185">Reference proteome</keyword>
<keyword id="KW-0813">Transport</keyword>
<organism>
    <name type="scientific">Pseudomonas aeruginosa (strain ATCC 15692 / DSM 22644 / CIP 104116 / JCM 14847 / LMG 12228 / 1C / PRS 101 / PAO1)</name>
    <dbReference type="NCBI Taxonomy" id="208964"/>
    <lineage>
        <taxon>Bacteria</taxon>
        <taxon>Pseudomonadati</taxon>
        <taxon>Pseudomonadota</taxon>
        <taxon>Gammaproteobacteria</taxon>
        <taxon>Pseudomonadales</taxon>
        <taxon>Pseudomonadaceae</taxon>
        <taxon>Pseudomonas</taxon>
    </lineage>
</organism>
<gene>
    <name type="primary">pilT</name>
    <name type="ordered locus">PA0395</name>
</gene>
<proteinExistence type="evidence at protein level"/>
<protein>
    <recommendedName>
        <fullName evidence="7">Type IV pilus retractation ATPase PilT</fullName>
    </recommendedName>
</protein>
<comment type="function">
    <text evidence="1 2 4 5 6">ATPase component of the type IV pilus (T4P) that plays a role in surface and host cell adhesion, colonization, biofilm maturation, virulence, and twitching, a form of surface-associated motility facilitated by cycles of extension, adhesion, and retraction of T4P fibers (PubMed:10377148, PubMed:15629932, PubMed:18174131). Acts as a molecular motor to provide the energy that is required for T4P retraction while antagonist PilB ATPase activity is required for T4P extension (PubMed:26809217). Also promotes PilU retractation activity through direct interaction (PubMed:31626631).</text>
</comment>
<comment type="subunit">
    <text evidence="6 9">Homohexamer (PubMed:31626631). Interacts with PilU (Probable).</text>
</comment>
<comment type="subcellular location">
    <subcellularLocation>
        <location evidence="3">Cytoplasm</location>
    </subcellularLocation>
    <text evidence="3">Localizes to cell poles.</text>
</comment>
<comment type="domain">
    <text evidence="3">The N-terminal region is responsible for proper localization to the piliated pole.</text>
</comment>
<comment type="disruption phenotype">
    <text evidence="1 2">Mutants retain surface pili but have lost twitching motility (PubMed:15629932). In a mouse model of acute pneumonia, a decreased colonization of the liver is observed but not of the lung relative to the parental strain (PubMed:10377148).</text>
</comment>
<comment type="similarity">
    <text evidence="8">Belongs to the GSP E family.</text>
</comment>
<dbReference type="EMBL" id="M55524">
    <property type="protein sequence ID" value="AAA25963.1"/>
    <property type="molecule type" value="Genomic_DNA"/>
</dbReference>
<dbReference type="EMBL" id="AE004091">
    <property type="protein sequence ID" value="AAG03784.1"/>
    <property type="molecule type" value="Genomic_DNA"/>
</dbReference>
<dbReference type="PIR" id="JN0055">
    <property type="entry name" value="JN0055"/>
</dbReference>
<dbReference type="RefSeq" id="NP_249086.1">
    <property type="nucleotide sequence ID" value="NC_002516.2"/>
</dbReference>
<dbReference type="RefSeq" id="WP_003084552.1">
    <property type="nucleotide sequence ID" value="NZ_QZGE01000016.1"/>
</dbReference>
<dbReference type="PDB" id="3JVU">
    <property type="method" value="X-ray"/>
    <property type="resolution" value="3.10 A"/>
    <property type="chains" value="A/B/C=1-344"/>
</dbReference>
<dbReference type="PDB" id="3JVV">
    <property type="method" value="X-ray"/>
    <property type="resolution" value="2.60 A"/>
    <property type="chains" value="A/B/C=1-344"/>
</dbReference>
<dbReference type="PDBsum" id="3JVU"/>
<dbReference type="PDBsum" id="3JVV"/>
<dbReference type="SMR" id="P24559"/>
<dbReference type="FunCoup" id="P24559">
    <property type="interactions" value="527"/>
</dbReference>
<dbReference type="STRING" id="208964.PA0395"/>
<dbReference type="TCDB" id="3.A.15.2.1">
    <property type="family name" value="the outer membrane protein secreting main terminal branch (mtb) family"/>
</dbReference>
<dbReference type="PaxDb" id="208964-PA0395"/>
<dbReference type="DNASU" id="878389"/>
<dbReference type="GeneID" id="77218922"/>
<dbReference type="GeneID" id="878389"/>
<dbReference type="KEGG" id="pae:PA0395"/>
<dbReference type="PATRIC" id="fig|208964.12.peg.416"/>
<dbReference type="PseudoCAP" id="PA0395"/>
<dbReference type="HOGENOM" id="CLU_013446_4_0_6"/>
<dbReference type="InParanoid" id="P24559"/>
<dbReference type="OrthoDB" id="9804785at2"/>
<dbReference type="PhylomeDB" id="P24559"/>
<dbReference type="BioCyc" id="PAER208964:G1FZ6-399-MONOMER"/>
<dbReference type="EvolutionaryTrace" id="P24559"/>
<dbReference type="Proteomes" id="UP000002438">
    <property type="component" value="Chromosome"/>
</dbReference>
<dbReference type="GO" id="GO:0005829">
    <property type="term" value="C:cytosol"/>
    <property type="evidence" value="ECO:0000318"/>
    <property type="project" value="GO_Central"/>
</dbReference>
<dbReference type="GO" id="GO:0044096">
    <property type="term" value="C:type IV pilus"/>
    <property type="evidence" value="ECO:0000304"/>
    <property type="project" value="PseudoCAP"/>
</dbReference>
<dbReference type="GO" id="GO:0005524">
    <property type="term" value="F:ATP binding"/>
    <property type="evidence" value="ECO:0007669"/>
    <property type="project" value="UniProtKB-KW"/>
</dbReference>
<dbReference type="GO" id="GO:0016887">
    <property type="term" value="F:ATP hydrolysis activity"/>
    <property type="evidence" value="ECO:0000314"/>
    <property type="project" value="PseudoCAP"/>
</dbReference>
<dbReference type="GO" id="GO:0043108">
    <property type="term" value="P:pilus retraction"/>
    <property type="evidence" value="ECO:0000304"/>
    <property type="project" value="PseudoCAP"/>
</dbReference>
<dbReference type="GO" id="GO:0043107">
    <property type="term" value="P:type IV pilus-dependent motility"/>
    <property type="evidence" value="ECO:0000304"/>
    <property type="project" value="PseudoCAP"/>
</dbReference>
<dbReference type="CDD" id="cd01131">
    <property type="entry name" value="PilT"/>
    <property type="match status" value="1"/>
</dbReference>
<dbReference type="FunFam" id="3.30.450.90:FF:000002">
    <property type="entry name" value="Twitching motility protein PilT"/>
    <property type="match status" value="1"/>
</dbReference>
<dbReference type="FunFam" id="3.40.50.300:FF:000872">
    <property type="entry name" value="Twitching motility protein PilT"/>
    <property type="match status" value="1"/>
</dbReference>
<dbReference type="Gene3D" id="3.30.450.90">
    <property type="match status" value="1"/>
</dbReference>
<dbReference type="Gene3D" id="3.40.50.300">
    <property type="entry name" value="P-loop containing nucleotide triphosphate hydrolases"/>
    <property type="match status" value="1"/>
</dbReference>
<dbReference type="InterPro" id="IPR003593">
    <property type="entry name" value="AAA+_ATPase"/>
</dbReference>
<dbReference type="InterPro" id="IPR027417">
    <property type="entry name" value="P-loop_NTPase"/>
</dbReference>
<dbReference type="InterPro" id="IPR006321">
    <property type="entry name" value="PilT/PilU"/>
</dbReference>
<dbReference type="InterPro" id="IPR001482">
    <property type="entry name" value="T2SS/T4SS_dom"/>
</dbReference>
<dbReference type="InterPro" id="IPR050921">
    <property type="entry name" value="T4SS_GSP_E_ATPase"/>
</dbReference>
<dbReference type="NCBIfam" id="TIGR01420">
    <property type="entry name" value="pilT_fam"/>
    <property type="match status" value="1"/>
</dbReference>
<dbReference type="PANTHER" id="PTHR30486">
    <property type="entry name" value="TWITCHING MOTILITY PROTEIN PILT"/>
    <property type="match status" value="1"/>
</dbReference>
<dbReference type="PANTHER" id="PTHR30486:SF6">
    <property type="entry name" value="TYPE IV PILUS RETRACTATION ATPASE PILT"/>
    <property type="match status" value="1"/>
</dbReference>
<dbReference type="Pfam" id="PF00437">
    <property type="entry name" value="T2SSE"/>
    <property type="match status" value="1"/>
</dbReference>
<dbReference type="SMART" id="SM00382">
    <property type="entry name" value="AAA"/>
    <property type="match status" value="1"/>
</dbReference>
<dbReference type="SUPFAM" id="SSF52540">
    <property type="entry name" value="P-loop containing nucleoside triphosphate hydrolases"/>
    <property type="match status" value="1"/>
</dbReference>
<dbReference type="PROSITE" id="PS00662">
    <property type="entry name" value="T2SP_E"/>
    <property type="match status" value="1"/>
</dbReference>
<evidence type="ECO:0000269" key="1">
    <source>
    </source>
</evidence>
<evidence type="ECO:0000269" key="2">
    <source>
    </source>
</evidence>
<evidence type="ECO:0000269" key="3">
    <source>
    </source>
</evidence>
<evidence type="ECO:0000269" key="4">
    <source>
    </source>
</evidence>
<evidence type="ECO:0000269" key="5">
    <source>
    </source>
</evidence>
<evidence type="ECO:0000269" key="6">
    <source>
    </source>
</evidence>
<evidence type="ECO:0000303" key="7">
    <source>
    </source>
</evidence>
<evidence type="ECO:0000305" key="8"/>
<evidence type="ECO:0000305" key="9">
    <source>
    </source>
</evidence>
<evidence type="ECO:0007744" key="10">
    <source>
        <dbReference type="PDB" id="3JVU"/>
    </source>
</evidence>
<evidence type="ECO:0007744" key="11">
    <source>
        <dbReference type="PDB" id="3JVV"/>
    </source>
</evidence>
<evidence type="ECO:0007829" key="12">
    <source>
        <dbReference type="PDB" id="3JVV"/>
    </source>
</evidence>
<feature type="chain" id="PRO_0000207296" description="Type IV pilus retractation ATPase PilT">
    <location>
        <begin position="1"/>
        <end position="344"/>
    </location>
</feature>
<feature type="binding site" evidence="11">
    <location>
        <position position="82"/>
    </location>
    <ligand>
        <name>ATP</name>
        <dbReference type="ChEBI" id="CHEBI:30616"/>
    </ligand>
</feature>
<feature type="binding site" evidence="11">
    <location>
        <begin position="133"/>
        <end position="138"/>
    </location>
    <ligand>
        <name>ATP</name>
        <dbReference type="ChEBI" id="CHEBI:30616"/>
    </ligand>
</feature>
<feature type="mutagenesis site" description="Complete loss of ATPase activity and twitching activity." evidence="4">
    <original>G</original>
    <variation>S</variation>
    <location>
        <position position="135"/>
    </location>
</feature>
<feature type="mutagenesis site" description="Loss of motility." evidence="2">
    <original>K</original>
    <variation>Q</variation>
    <location>
        <position position="136"/>
    </location>
</feature>
<feature type="mutagenesis site" description="About 50% loss of ATPase activity and twitching activity." evidence="4">
    <original>E</original>
    <variation>Q</variation>
    <location>
        <position position="163"/>
    </location>
</feature>
<feature type="mutagenesis site" description="Complete loss of ATPase activity and twitching activity." evidence="4">
    <original>E</original>
    <variation>Q</variation>
    <location>
        <position position="204"/>
    </location>
</feature>
<feature type="mutagenesis site" description="About 80% loss of ATPase activity." evidence="4">
    <original>H</original>
    <variation>A</variation>
    <location>
        <position position="229"/>
    </location>
</feature>
<feature type="mutagenesis site" description="Loss of motility." evidence="2">
    <original>A</original>
    <variation>V</variation>
    <location>
        <position position="288"/>
    </location>
</feature>
<feature type="mutagenesis site" description="Loss of motility." evidence="2">
    <original>I</original>
    <variation>A</variation>
    <location>
        <position position="289"/>
    </location>
</feature>
<feature type="mutagenesis site" description="Loss of motility." evidence="2">
    <original>L</original>
    <variation>A</variation>
    <location>
        <position position="292"/>
    </location>
</feature>
<feature type="helix" evidence="12">
    <location>
        <begin position="3"/>
        <end position="12"/>
    </location>
</feature>
<feature type="strand" evidence="12">
    <location>
        <begin position="16"/>
        <end position="21"/>
    </location>
</feature>
<feature type="strand" evidence="12">
    <location>
        <begin position="27"/>
        <end position="30"/>
    </location>
</feature>
<feature type="strand" evidence="12">
    <location>
        <begin position="33"/>
        <end position="36"/>
    </location>
</feature>
<feature type="helix" evidence="12">
    <location>
        <begin position="44"/>
        <end position="54"/>
    </location>
</feature>
<feature type="helix" evidence="12">
    <location>
        <begin position="57"/>
        <end position="66"/>
    </location>
</feature>
<feature type="strand" evidence="12">
    <location>
        <begin position="69"/>
        <end position="75"/>
    </location>
</feature>
<feature type="turn" evidence="12">
    <location>
        <begin position="76"/>
        <end position="78"/>
    </location>
</feature>
<feature type="strand" evidence="12">
    <location>
        <begin position="79"/>
        <end position="88"/>
    </location>
</feature>
<feature type="strand" evidence="12">
    <location>
        <begin position="91"/>
        <end position="99"/>
    </location>
</feature>
<feature type="turn" evidence="12">
    <location>
        <begin position="106"/>
        <end position="110"/>
    </location>
</feature>
<feature type="helix" evidence="12">
    <location>
        <begin position="113"/>
        <end position="120"/>
    </location>
</feature>
<feature type="strand" evidence="12">
    <location>
        <begin position="122"/>
        <end position="129"/>
    </location>
</feature>
<feature type="helix" evidence="12">
    <location>
        <begin position="136"/>
        <end position="150"/>
    </location>
</feature>
<feature type="strand" evidence="12">
    <location>
        <begin position="154"/>
        <end position="161"/>
    </location>
</feature>
<feature type="strand" evidence="12">
    <location>
        <begin position="169"/>
        <end position="177"/>
    </location>
</feature>
<feature type="turn" evidence="12">
    <location>
        <begin position="178"/>
        <end position="180"/>
    </location>
</feature>
<feature type="strand" evidence="12">
    <location>
        <begin position="181"/>
        <end position="183"/>
    </location>
</feature>
<feature type="helix" evidence="12">
    <location>
        <begin position="185"/>
        <end position="192"/>
    </location>
</feature>
<feature type="strand" evidence="12">
    <location>
        <begin position="198"/>
        <end position="203"/>
    </location>
</feature>
<feature type="helix" evidence="12">
    <location>
        <begin position="208"/>
        <end position="219"/>
    </location>
</feature>
<feature type="strand" evidence="12">
    <location>
        <begin position="223"/>
        <end position="229"/>
    </location>
</feature>
<feature type="helix" evidence="12">
    <location>
        <begin position="233"/>
        <end position="242"/>
    </location>
</feature>
<feature type="helix" evidence="12">
    <location>
        <begin position="246"/>
        <end position="259"/>
    </location>
</feature>
<feature type="strand" evidence="12">
    <location>
        <begin position="260"/>
        <end position="269"/>
    </location>
</feature>
<feature type="strand" evidence="12">
    <location>
        <begin position="277"/>
        <end position="284"/>
    </location>
</feature>
<feature type="helix" evidence="12">
    <location>
        <begin position="287"/>
        <end position="295"/>
    </location>
</feature>
<feature type="helix" evidence="12">
    <location>
        <begin position="298"/>
        <end position="300"/>
    </location>
</feature>
<feature type="helix" evidence="12">
    <location>
        <begin position="301"/>
        <end position="306"/>
    </location>
</feature>
<feature type="helix" evidence="12">
    <location>
        <begin position="309"/>
        <end position="311"/>
    </location>
</feature>
<feature type="helix" evidence="12">
    <location>
        <begin position="316"/>
        <end position="320"/>
    </location>
</feature>
<feature type="helix" evidence="12">
    <location>
        <begin position="331"/>
        <end position="336"/>
    </location>
</feature>